<protein>
    <recommendedName>
        <fullName evidence="1">Small ribosomal subunit protein uS4B</fullName>
    </recommendedName>
    <alternativeName>
        <fullName evidence="2">30S ribosomal protein S4 2</fullName>
    </alternativeName>
</protein>
<gene>
    <name evidence="1" type="primary">rpsD2</name>
    <name type="ordered locus">Clos_1939</name>
</gene>
<reference key="1">
    <citation type="submission" date="2007-10" db="EMBL/GenBank/DDBJ databases">
        <title>Complete genome of Alkaliphilus oremlandii OhILAs.</title>
        <authorList>
            <person name="Copeland A."/>
            <person name="Lucas S."/>
            <person name="Lapidus A."/>
            <person name="Barry K."/>
            <person name="Detter J.C."/>
            <person name="Glavina del Rio T."/>
            <person name="Hammon N."/>
            <person name="Israni S."/>
            <person name="Dalin E."/>
            <person name="Tice H."/>
            <person name="Pitluck S."/>
            <person name="Chain P."/>
            <person name="Malfatti S."/>
            <person name="Shin M."/>
            <person name="Vergez L."/>
            <person name="Schmutz J."/>
            <person name="Larimer F."/>
            <person name="Land M."/>
            <person name="Hauser L."/>
            <person name="Kyrpides N."/>
            <person name="Mikhailova N."/>
            <person name="Stolz J.F."/>
            <person name="Dawson A."/>
            <person name="Fisher E."/>
            <person name="Crable B."/>
            <person name="Perera E."/>
            <person name="Lisak J."/>
            <person name="Ranganathan M."/>
            <person name="Basu P."/>
            <person name="Richardson P."/>
        </authorList>
    </citation>
    <scope>NUCLEOTIDE SEQUENCE [LARGE SCALE GENOMIC DNA]</scope>
    <source>
        <strain>OhILAs</strain>
    </source>
</reference>
<keyword id="KW-1185">Reference proteome</keyword>
<keyword id="KW-0687">Ribonucleoprotein</keyword>
<keyword id="KW-0689">Ribosomal protein</keyword>
<keyword id="KW-0694">RNA-binding</keyword>
<keyword id="KW-0699">rRNA-binding</keyword>
<evidence type="ECO:0000255" key="1">
    <source>
        <dbReference type="HAMAP-Rule" id="MF_01306"/>
    </source>
</evidence>
<evidence type="ECO:0000305" key="2"/>
<organism>
    <name type="scientific">Alkaliphilus oremlandii (strain OhILAs)</name>
    <name type="common">Clostridium oremlandii (strain OhILAs)</name>
    <dbReference type="NCBI Taxonomy" id="350688"/>
    <lineage>
        <taxon>Bacteria</taxon>
        <taxon>Bacillati</taxon>
        <taxon>Bacillota</taxon>
        <taxon>Clostridia</taxon>
        <taxon>Peptostreptococcales</taxon>
        <taxon>Natronincolaceae</taxon>
        <taxon>Alkaliphilus</taxon>
    </lineage>
</organism>
<sequence>MAKMMEPRFKLSRSLGVNIYGHPKAMQRAGKTAGRASKKLSSYGLQLLEKQKLRAYYGVLEKQFVIYVEKAMKASGLSGEALIQSLECRLDNMVYRMGFASSIREARQMVNHGHILVNGKKVDRPSYPIQVDDAVALRERSQKIEKYLSNLKNTTINFDYIETDVSSFTGRLLRIPNREEIPVEVNEQLVIEFYSKK</sequence>
<name>RS4B_ALKOO</name>
<dbReference type="EMBL" id="CP000853">
    <property type="protein sequence ID" value="ABW19477.1"/>
    <property type="molecule type" value="Genomic_DNA"/>
</dbReference>
<dbReference type="RefSeq" id="WP_012159789.1">
    <property type="nucleotide sequence ID" value="NC_009922.1"/>
</dbReference>
<dbReference type="SMR" id="A8MI45"/>
<dbReference type="STRING" id="350688.Clos_1939"/>
<dbReference type="KEGG" id="aoe:Clos_1939"/>
<dbReference type="eggNOG" id="COG0522">
    <property type="taxonomic scope" value="Bacteria"/>
</dbReference>
<dbReference type="HOGENOM" id="CLU_092403_0_1_9"/>
<dbReference type="OrthoDB" id="9803672at2"/>
<dbReference type="Proteomes" id="UP000000269">
    <property type="component" value="Chromosome"/>
</dbReference>
<dbReference type="GO" id="GO:0015935">
    <property type="term" value="C:small ribosomal subunit"/>
    <property type="evidence" value="ECO:0007669"/>
    <property type="project" value="InterPro"/>
</dbReference>
<dbReference type="GO" id="GO:0019843">
    <property type="term" value="F:rRNA binding"/>
    <property type="evidence" value="ECO:0007669"/>
    <property type="project" value="UniProtKB-UniRule"/>
</dbReference>
<dbReference type="GO" id="GO:0003735">
    <property type="term" value="F:structural constituent of ribosome"/>
    <property type="evidence" value="ECO:0007669"/>
    <property type="project" value="InterPro"/>
</dbReference>
<dbReference type="GO" id="GO:0042274">
    <property type="term" value="P:ribosomal small subunit biogenesis"/>
    <property type="evidence" value="ECO:0007669"/>
    <property type="project" value="TreeGrafter"/>
</dbReference>
<dbReference type="GO" id="GO:0006412">
    <property type="term" value="P:translation"/>
    <property type="evidence" value="ECO:0007669"/>
    <property type="project" value="UniProtKB-UniRule"/>
</dbReference>
<dbReference type="CDD" id="cd00165">
    <property type="entry name" value="S4"/>
    <property type="match status" value="1"/>
</dbReference>
<dbReference type="FunFam" id="3.10.290.10:FF:000001">
    <property type="entry name" value="30S ribosomal protein S4"/>
    <property type="match status" value="1"/>
</dbReference>
<dbReference type="Gene3D" id="1.10.1050.10">
    <property type="entry name" value="Ribosomal Protein S4 Delta 41, Chain A, domain 1"/>
    <property type="match status" value="1"/>
</dbReference>
<dbReference type="Gene3D" id="3.10.290.10">
    <property type="entry name" value="RNA-binding S4 domain"/>
    <property type="match status" value="1"/>
</dbReference>
<dbReference type="HAMAP" id="MF_01306_B">
    <property type="entry name" value="Ribosomal_uS4_B"/>
    <property type="match status" value="1"/>
</dbReference>
<dbReference type="InterPro" id="IPR022801">
    <property type="entry name" value="Ribosomal_uS4"/>
</dbReference>
<dbReference type="InterPro" id="IPR005709">
    <property type="entry name" value="Ribosomal_uS4_bac-type"/>
</dbReference>
<dbReference type="InterPro" id="IPR018079">
    <property type="entry name" value="Ribosomal_uS4_CS"/>
</dbReference>
<dbReference type="InterPro" id="IPR001912">
    <property type="entry name" value="Ribosomal_uS4_N"/>
</dbReference>
<dbReference type="InterPro" id="IPR002942">
    <property type="entry name" value="S4_RNA-bd"/>
</dbReference>
<dbReference type="InterPro" id="IPR036986">
    <property type="entry name" value="S4_RNA-bd_sf"/>
</dbReference>
<dbReference type="NCBIfam" id="NF003717">
    <property type="entry name" value="PRK05327.1"/>
    <property type="match status" value="1"/>
</dbReference>
<dbReference type="NCBIfam" id="TIGR01017">
    <property type="entry name" value="rpsD_bact"/>
    <property type="match status" value="1"/>
</dbReference>
<dbReference type="PANTHER" id="PTHR11831">
    <property type="entry name" value="30S 40S RIBOSOMAL PROTEIN"/>
    <property type="match status" value="1"/>
</dbReference>
<dbReference type="PANTHER" id="PTHR11831:SF4">
    <property type="entry name" value="SMALL RIBOSOMAL SUBUNIT PROTEIN US4M"/>
    <property type="match status" value="1"/>
</dbReference>
<dbReference type="Pfam" id="PF00163">
    <property type="entry name" value="Ribosomal_S4"/>
    <property type="match status" value="1"/>
</dbReference>
<dbReference type="Pfam" id="PF01479">
    <property type="entry name" value="S4"/>
    <property type="match status" value="1"/>
</dbReference>
<dbReference type="SMART" id="SM01390">
    <property type="entry name" value="Ribosomal_S4"/>
    <property type="match status" value="1"/>
</dbReference>
<dbReference type="SMART" id="SM00363">
    <property type="entry name" value="S4"/>
    <property type="match status" value="1"/>
</dbReference>
<dbReference type="SUPFAM" id="SSF55174">
    <property type="entry name" value="Alpha-L RNA-binding motif"/>
    <property type="match status" value="1"/>
</dbReference>
<dbReference type="PROSITE" id="PS00632">
    <property type="entry name" value="RIBOSOMAL_S4"/>
    <property type="match status" value="1"/>
</dbReference>
<dbReference type="PROSITE" id="PS50889">
    <property type="entry name" value="S4"/>
    <property type="match status" value="1"/>
</dbReference>
<comment type="function">
    <text evidence="1">One of the primary rRNA binding proteins, it binds directly to 16S rRNA where it nucleates assembly of the body of the 30S subunit.</text>
</comment>
<comment type="function">
    <text evidence="1">With S5 and S12 plays an important role in translational accuracy.</text>
</comment>
<comment type="subunit">
    <text evidence="1">Part of the 30S ribosomal subunit. Contacts protein S5. The interaction surface between S4 and S5 is involved in control of translational fidelity.</text>
</comment>
<comment type="similarity">
    <text evidence="1">Belongs to the universal ribosomal protein uS4 family.</text>
</comment>
<accession>A8MI45</accession>
<feature type="chain" id="PRO_0000322262" description="Small ribosomal subunit protein uS4B">
    <location>
        <begin position="1"/>
        <end position="197"/>
    </location>
</feature>
<feature type="domain" description="S4 RNA-binding" evidence="1">
    <location>
        <begin position="88"/>
        <end position="153"/>
    </location>
</feature>
<proteinExistence type="inferred from homology"/>